<keyword id="KW-0007">Acetylation</keyword>
<keyword id="KW-0020">Allergen</keyword>
<keyword id="KW-0106">Calcium</keyword>
<keyword id="KW-0903">Direct protein sequencing</keyword>
<keyword id="KW-0479">Metal-binding</keyword>
<keyword id="KW-0514">Muscle protein</keyword>
<keyword id="KW-0677">Repeat</keyword>
<name>PRVB1_MACMG</name>
<dbReference type="SMR" id="P86739"/>
<dbReference type="iPTMnet" id="P86739"/>
<dbReference type="GO" id="GO:0005737">
    <property type="term" value="C:cytoplasm"/>
    <property type="evidence" value="ECO:0007669"/>
    <property type="project" value="TreeGrafter"/>
</dbReference>
<dbReference type="GO" id="GO:0005509">
    <property type="term" value="F:calcium ion binding"/>
    <property type="evidence" value="ECO:0007669"/>
    <property type="project" value="InterPro"/>
</dbReference>
<dbReference type="Gene3D" id="1.10.238.10">
    <property type="entry name" value="EF-hand"/>
    <property type="match status" value="1"/>
</dbReference>
<dbReference type="InterPro" id="IPR011992">
    <property type="entry name" value="EF-hand-dom_pair"/>
</dbReference>
<dbReference type="InterPro" id="IPR018247">
    <property type="entry name" value="EF_Hand_1_Ca_BS"/>
</dbReference>
<dbReference type="InterPro" id="IPR002048">
    <property type="entry name" value="EF_hand_dom"/>
</dbReference>
<dbReference type="InterPro" id="IPR008080">
    <property type="entry name" value="Parvalbumin"/>
</dbReference>
<dbReference type="PANTHER" id="PTHR11653:SF12">
    <property type="entry name" value="PARVALBUMIN"/>
    <property type="match status" value="1"/>
</dbReference>
<dbReference type="PANTHER" id="PTHR11653">
    <property type="entry name" value="PARVALBUMIN ALPHA"/>
    <property type="match status" value="1"/>
</dbReference>
<dbReference type="Pfam" id="PF13499">
    <property type="entry name" value="EF-hand_7"/>
    <property type="match status" value="1"/>
</dbReference>
<dbReference type="PRINTS" id="PR01697">
    <property type="entry name" value="PARVALBUMIN"/>
</dbReference>
<dbReference type="SUPFAM" id="SSF47473">
    <property type="entry name" value="EF-hand"/>
    <property type="match status" value="1"/>
</dbReference>
<dbReference type="PROSITE" id="PS00018">
    <property type="entry name" value="EF_HAND_1"/>
    <property type="match status" value="2"/>
</dbReference>
<dbReference type="PROSITE" id="PS50222">
    <property type="entry name" value="EF_HAND_2"/>
    <property type="match status" value="2"/>
</dbReference>
<accession>P86739</accession>
<protein>
    <recommendedName>
        <fullName evidence="7">Parvalbumin beta 1</fullName>
    </recommendedName>
</protein>
<comment type="function">
    <text evidence="2 3">In muscle, parvalbumin is thought to be involved in relaxation after contraction. It binds two calcium ions (By similarity).</text>
</comment>
<comment type="miscellaneous">
    <text evidence="2 6">Is regarded as an important allergen.</text>
</comment>
<comment type="miscellaneous">
    <text evidence="6">On the 2D-gel the determined pI of this protein is: 4.51, its MW is: 11.25 kDa.</text>
</comment>
<comment type="similarity">
    <text evidence="4">Belongs to the parvalbumin family.</text>
</comment>
<evidence type="ECO:0000250" key="1">
    <source>
        <dbReference type="UniProtKB" id="P02621"/>
    </source>
</evidence>
<evidence type="ECO:0000250" key="2">
    <source>
        <dbReference type="UniProtKB" id="P02622"/>
    </source>
</evidence>
<evidence type="ECO:0000250" key="3">
    <source>
        <dbReference type="UniProtKB" id="P02624"/>
    </source>
</evidence>
<evidence type="ECO:0000255" key="4"/>
<evidence type="ECO:0000255" key="5">
    <source>
        <dbReference type="PROSITE-ProRule" id="PRU00448"/>
    </source>
</evidence>
<evidence type="ECO:0000269" key="6">
    <source>
    </source>
</evidence>
<evidence type="ECO:0000303" key="7">
    <source>
    </source>
</evidence>
<evidence type="ECO:0000305" key="8"/>
<reference evidence="8" key="1">
    <citation type="journal article" date="2010" name="J. Proteome Res.">
        <title>Extensive de novo sequencing of new parvalbumin isoforms using a novel combination of bottom-up proteomics, accurate molecular mass measurement by FTICR-MS, and selected MS/MS ion monitoring.</title>
        <authorList>
            <person name="Carrera M."/>
            <person name="Canas B."/>
            <person name="Vazquez J."/>
            <person name="Gallardo J.M."/>
        </authorList>
    </citation>
    <scope>PROTEIN SEQUENCE</scope>
    <scope>ACETYLATION AT SER-1</scope>
    <source>
        <tissue evidence="6">Muscle</tissue>
    </source>
</reference>
<sequence length="98" mass="10348">SFAGILDDADITAALAACKAEGSFKHVEFFAKIGLAGKKVFAIIDQDKSDFVEEDELKLFLQVFSAGARALTDAETKAGDSDGDGKIGVDEFAQMIKG</sequence>
<feature type="chain" id="PRO_0000399399" description="Parvalbumin beta 1">
    <location>
        <begin position="1"/>
        <end position="98" status="greater than"/>
    </location>
</feature>
<feature type="domain" description="EF-hand 1" evidence="5">
    <location>
        <begin position="32"/>
        <end position="67"/>
    </location>
</feature>
<feature type="domain" description="EF-hand 2" evidence="5">
    <location>
        <begin position="67"/>
        <end position="98" status="greater than"/>
    </location>
</feature>
<feature type="binding site" evidence="1 5">
    <location>
        <position position="45"/>
    </location>
    <ligand>
        <name>Ca(2+)</name>
        <dbReference type="ChEBI" id="CHEBI:29108"/>
        <label>1</label>
    </ligand>
</feature>
<feature type="binding site" evidence="1 5">
    <location>
        <position position="47"/>
    </location>
    <ligand>
        <name>Ca(2+)</name>
        <dbReference type="ChEBI" id="CHEBI:29108"/>
        <label>1</label>
    </ligand>
</feature>
<feature type="binding site" evidence="1 5">
    <location>
        <position position="49"/>
    </location>
    <ligand>
        <name>Ca(2+)</name>
        <dbReference type="ChEBI" id="CHEBI:29108"/>
        <label>1</label>
    </ligand>
</feature>
<feature type="binding site" evidence="1">
    <location>
        <position position="51"/>
    </location>
    <ligand>
        <name>Ca(2+)</name>
        <dbReference type="ChEBI" id="CHEBI:29108"/>
        <label>1</label>
    </ligand>
</feature>
<feature type="binding site" evidence="1">
    <location>
        <position position="53"/>
    </location>
    <ligand>
        <name>Ca(2+)</name>
        <dbReference type="ChEBI" id="CHEBI:29108"/>
        <label>1</label>
    </ligand>
</feature>
<feature type="binding site" evidence="1 5">
    <location>
        <position position="56"/>
    </location>
    <ligand>
        <name>Ca(2+)</name>
        <dbReference type="ChEBI" id="CHEBI:29108"/>
        <label>1</label>
    </ligand>
</feature>
<feature type="binding site" evidence="1 5">
    <location>
        <position position="80"/>
    </location>
    <ligand>
        <name>Ca(2+)</name>
        <dbReference type="ChEBI" id="CHEBI:29108"/>
        <label>2</label>
    </ligand>
</feature>
<feature type="binding site" evidence="1 5">
    <location>
        <position position="82"/>
    </location>
    <ligand>
        <name>Ca(2+)</name>
        <dbReference type="ChEBI" id="CHEBI:29108"/>
        <label>2</label>
    </ligand>
</feature>
<feature type="binding site" evidence="1 5">
    <location>
        <position position="84"/>
    </location>
    <ligand>
        <name>Ca(2+)</name>
        <dbReference type="ChEBI" id="CHEBI:29108"/>
        <label>2</label>
    </ligand>
</feature>
<feature type="binding site" evidence="5">
    <location>
        <position position="86"/>
    </location>
    <ligand>
        <name>Ca(2+)</name>
        <dbReference type="ChEBI" id="CHEBI:29108"/>
        <label>2</label>
    </ligand>
</feature>
<feature type="binding site" evidence="1 5">
    <location>
        <position position="91"/>
    </location>
    <ligand>
        <name>Ca(2+)</name>
        <dbReference type="ChEBI" id="CHEBI:29108"/>
        <label>2</label>
    </ligand>
</feature>
<feature type="modified residue" description="N-acetylserine" evidence="6">
    <location>
        <position position="1"/>
    </location>
</feature>
<feature type="unsure residue" description="I or L" evidence="6">
    <location>
        <position position="5"/>
    </location>
</feature>
<feature type="unsure residue" description="L or I" evidence="6">
    <location>
        <position position="6"/>
    </location>
</feature>
<feature type="unsure residue" description="I or L" evidence="6">
    <location>
        <position position="11"/>
    </location>
</feature>
<feature type="unsure residue" description="L or I" evidence="6">
    <location>
        <position position="15"/>
    </location>
</feature>
<feature type="unsure residue" description="K or Q" evidence="6">
    <location>
        <position position="19"/>
    </location>
</feature>
<feature type="unsure residue" description="K or Q" evidence="6">
    <location>
        <position position="25"/>
    </location>
</feature>
<feature type="unsure residue" description="K or Q" evidence="6">
    <location>
        <position position="32"/>
    </location>
</feature>
<feature type="unsure residue" description="I or L" evidence="6">
    <location>
        <position position="33"/>
    </location>
</feature>
<feature type="unsure residue" description="L or I" evidence="6">
    <location>
        <position position="35"/>
    </location>
</feature>
<feature type="unsure residue" description="K or Q" evidence="6">
    <location>
        <position position="38"/>
    </location>
</feature>
<feature type="unsure residue" description="K or Q" evidence="6">
    <location>
        <position position="39"/>
    </location>
</feature>
<feature type="unsure residue" description="I or L" evidence="6">
    <location>
        <position position="43"/>
    </location>
</feature>
<feature type="unsure residue" description="I or L" evidence="6">
    <location>
        <position position="44"/>
    </location>
</feature>
<feature type="unsure residue" description="Q or K" evidence="6">
    <location>
        <position position="46"/>
    </location>
</feature>
<feature type="unsure residue" description="K or Q" evidence="6">
    <location>
        <position position="48"/>
    </location>
</feature>
<feature type="unsure residue" description="L or I" evidence="6">
    <location>
        <position position="57"/>
    </location>
</feature>
<feature type="unsure residue" description="K or Q" evidence="6">
    <location>
        <position position="58"/>
    </location>
</feature>
<feature type="unsure residue" description="L or I" evidence="6">
    <location>
        <position position="59"/>
    </location>
</feature>
<feature type="unsure residue" description="L or I" evidence="6">
    <location>
        <position position="61"/>
    </location>
</feature>
<feature type="unsure residue" description="Q or K" evidence="6">
    <location>
        <position position="62"/>
    </location>
</feature>
<feature type="unsure residue" description="L or I" evidence="6">
    <location>
        <position position="71"/>
    </location>
</feature>
<feature type="unsure residue" description="K or Q" evidence="6">
    <location>
        <position position="77"/>
    </location>
</feature>
<feature type="unsure residue" description="K or Q" evidence="6">
    <location>
        <position position="86"/>
    </location>
</feature>
<feature type="unsure residue" description="I or L" evidence="6">
    <location>
        <position position="87"/>
    </location>
</feature>
<feature type="unsure residue" description="Q or K" evidence="6">
    <location>
        <position position="94"/>
    </location>
</feature>
<feature type="unsure residue" description="I or L" evidence="6">
    <location>
        <position position="96"/>
    </location>
</feature>
<feature type="unsure residue" description="K or Q" evidence="6">
    <location>
        <position position="97"/>
    </location>
</feature>
<feature type="non-consecutive residues" evidence="7">
    <location>
        <begin position="38"/>
        <end position="39"/>
    </location>
</feature>
<feature type="non-consecutive residues" evidence="7">
    <location>
        <begin position="83"/>
        <end position="84"/>
    </location>
</feature>
<feature type="non-terminal residue" evidence="7">
    <location>
        <position position="98"/>
    </location>
</feature>
<proteinExistence type="evidence at protein level"/>
<organism>
    <name type="scientific">Macruronus magellanicus</name>
    <name type="common">Patagonian grenadier</name>
    <name type="synonym">Macruronus novaezelandiae magellanicus</name>
    <dbReference type="NCBI Taxonomy" id="92050"/>
    <lineage>
        <taxon>Eukaryota</taxon>
        <taxon>Metazoa</taxon>
        <taxon>Chordata</taxon>
        <taxon>Craniata</taxon>
        <taxon>Vertebrata</taxon>
        <taxon>Euteleostomi</taxon>
        <taxon>Actinopterygii</taxon>
        <taxon>Neopterygii</taxon>
        <taxon>Teleostei</taxon>
        <taxon>Neoteleostei</taxon>
        <taxon>Acanthomorphata</taxon>
        <taxon>Zeiogadaria</taxon>
        <taxon>Gadariae</taxon>
        <taxon>Gadiformes</taxon>
        <taxon>Gadoidei</taxon>
        <taxon>Merlucciidae</taxon>
        <taxon>Macruronus</taxon>
    </lineage>
</organism>